<sequence length="50" mass="5842">MTLHHKLVLSMLLGLSITPEGDLPLSGQDIFYQYSFSSFYNIHDERIREQ</sequence>
<accession>P0C5P4</accession>
<proteinExistence type="uncertain"/>
<name>YK162_YEAST</name>
<evidence type="ECO:0000305" key="1">
    <source>
    </source>
</evidence>
<feature type="chain" id="PRO_0000309042" description="Putative uncharacterized protein YKL162C-A">
    <location>
        <begin position="1"/>
        <end position="50"/>
    </location>
</feature>
<gene>
    <name type="ordered locus">YKL162C-A</name>
</gene>
<reference key="1">
    <citation type="journal article" date="1994" name="Yeast">
        <title>DNA sequencing of a 36.2 kb fragment located between the FAS1 and LAP loci of chromosome XI of Saccharomyces cerevisiae.</title>
        <authorList>
            <person name="Vandenbol M."/>
            <person name="Bolle P.-A."/>
            <person name="Dion C."/>
            <person name="Portetelle D."/>
            <person name="Hilger F."/>
        </authorList>
    </citation>
    <scope>NUCLEOTIDE SEQUENCE [GENOMIC DNA]</scope>
    <source>
        <strain>ATCC 204508 / S288c</strain>
    </source>
</reference>
<reference key="2">
    <citation type="journal article" date="1994" name="Nature">
        <title>Complete DNA sequence of yeast chromosome XI.</title>
        <authorList>
            <person name="Dujon B."/>
            <person name="Alexandraki D."/>
            <person name="Andre B."/>
            <person name="Ansorge W."/>
            <person name="Baladron V."/>
            <person name="Ballesta J.P.G."/>
            <person name="Banrevi A."/>
            <person name="Bolle P.-A."/>
            <person name="Bolotin-Fukuhara M."/>
            <person name="Bossier P."/>
            <person name="Bou G."/>
            <person name="Boyer J."/>
            <person name="Buitrago M.J."/>
            <person name="Cheret G."/>
            <person name="Colleaux L."/>
            <person name="Daignan-Fornier B."/>
            <person name="del Rey F."/>
            <person name="Dion C."/>
            <person name="Domdey H."/>
            <person name="Duesterhoeft A."/>
            <person name="Duesterhus S."/>
            <person name="Entian K.-D."/>
            <person name="Erfle H."/>
            <person name="Esteban P.F."/>
            <person name="Feldmann H."/>
            <person name="Fernandes L."/>
            <person name="Fobo G.M."/>
            <person name="Fritz C."/>
            <person name="Fukuhara H."/>
            <person name="Gabel C."/>
            <person name="Gaillon L."/>
            <person name="Garcia-Cantalejo J.M."/>
            <person name="Garcia-Ramirez J.J."/>
            <person name="Gent M.E."/>
            <person name="Ghazvini M."/>
            <person name="Goffeau A."/>
            <person name="Gonzalez A."/>
            <person name="Grothues D."/>
            <person name="Guerreiro P."/>
            <person name="Hegemann J.H."/>
            <person name="Hewitt N."/>
            <person name="Hilger F."/>
            <person name="Hollenberg C.P."/>
            <person name="Horaitis O."/>
            <person name="Indge K.J."/>
            <person name="Jacquier A."/>
            <person name="James C.M."/>
            <person name="Jauniaux J.-C."/>
            <person name="Jimenez A."/>
            <person name="Keuchel H."/>
            <person name="Kirchrath L."/>
            <person name="Kleine K."/>
            <person name="Koetter P."/>
            <person name="Legrain P."/>
            <person name="Liebl S."/>
            <person name="Louis E.J."/>
            <person name="Maia e Silva A."/>
            <person name="Marck C."/>
            <person name="Monnier A.-L."/>
            <person name="Moestl D."/>
            <person name="Mueller S."/>
            <person name="Obermaier B."/>
            <person name="Oliver S.G."/>
            <person name="Pallier C."/>
            <person name="Pascolo S."/>
            <person name="Pfeiffer F."/>
            <person name="Philippsen P."/>
            <person name="Planta R.J."/>
            <person name="Pohl F.M."/>
            <person name="Pohl T.M."/>
            <person name="Poehlmann R."/>
            <person name="Portetelle D."/>
            <person name="Purnelle B."/>
            <person name="Puzos V."/>
            <person name="Ramezani Rad M."/>
            <person name="Rasmussen S.W."/>
            <person name="Remacha M.A."/>
            <person name="Revuelta J.L."/>
            <person name="Richard G.-F."/>
            <person name="Rieger M."/>
            <person name="Rodrigues-Pousada C."/>
            <person name="Rose M."/>
            <person name="Rupp T."/>
            <person name="Santos M.A."/>
            <person name="Schwager C."/>
            <person name="Sensen C."/>
            <person name="Skala J."/>
            <person name="Soares H."/>
            <person name="Sor F."/>
            <person name="Stegemann J."/>
            <person name="Tettelin H."/>
            <person name="Thierry A."/>
            <person name="Tzermia M."/>
            <person name="Urrestarazu L.A."/>
            <person name="van Dyck L."/>
            <person name="van Vliet-Reedijk J.C."/>
            <person name="Valens M."/>
            <person name="Vandenbol M."/>
            <person name="Vilela C."/>
            <person name="Vissers S."/>
            <person name="von Wettstein D."/>
            <person name="Voss H."/>
            <person name="Wiemann S."/>
            <person name="Xu G."/>
            <person name="Zimmermann J."/>
            <person name="Haasemann M."/>
            <person name="Becker I."/>
            <person name="Mewes H.-W."/>
        </authorList>
    </citation>
    <scope>NUCLEOTIDE SEQUENCE [LARGE SCALE GENOMIC DNA]</scope>
    <source>
        <strain>ATCC 204508 / S288c</strain>
    </source>
</reference>
<reference key="3">
    <citation type="journal article" date="2014" name="G3 (Bethesda)">
        <title>The reference genome sequence of Saccharomyces cerevisiae: Then and now.</title>
        <authorList>
            <person name="Engel S.R."/>
            <person name="Dietrich F.S."/>
            <person name="Fisk D.G."/>
            <person name="Binkley G."/>
            <person name="Balakrishnan R."/>
            <person name="Costanzo M.C."/>
            <person name="Dwight S.S."/>
            <person name="Hitz B.C."/>
            <person name="Karra K."/>
            <person name="Nash R.S."/>
            <person name="Weng S."/>
            <person name="Wong E.D."/>
            <person name="Lloyd P."/>
            <person name="Skrzypek M.S."/>
            <person name="Miyasato S.R."/>
            <person name="Simison M."/>
            <person name="Cherry J.M."/>
        </authorList>
    </citation>
    <scope>GENOME REANNOTATION</scope>
    <source>
        <strain>ATCC 204508 / S288c</strain>
    </source>
</reference>
<reference key="4">
    <citation type="journal article" date="1997" name="Cell">
        <title>Characterization of the yeast transcriptome.</title>
        <authorList>
            <person name="Velculescu V.E."/>
            <person name="Zhang L."/>
            <person name="Zhou W."/>
            <person name="Vogelstein J."/>
            <person name="Basrai M.A."/>
            <person name="Bassett D.E. Jr."/>
            <person name="Hieter P."/>
            <person name="Vogelstein B."/>
            <person name="Kinzler K.W."/>
        </authorList>
    </citation>
    <scope>GENOME REANNOTATION</scope>
</reference>
<comment type="caution">
    <text evidence="1">Product of a dubious gene prediction unlikely to encode a functional protein. Because of that it is not part of the S.cerevisiae S288c complete/reference proteome set.</text>
</comment>
<dbReference type="EMBL" id="Z26877">
    <property type="status" value="NOT_ANNOTATED_CDS"/>
    <property type="molecule type" value="Genomic_DNA"/>
</dbReference>
<dbReference type="EMBL" id="Z28162">
    <property type="status" value="NOT_ANNOTATED_CDS"/>
    <property type="molecule type" value="Genomic_DNA"/>
</dbReference>
<dbReference type="EMBL" id="Z28163">
    <property type="status" value="NOT_ANNOTATED_CDS"/>
    <property type="molecule type" value="Genomic_DNA"/>
</dbReference>
<dbReference type="STRING" id="4932.YKL162C-A"/>
<dbReference type="PaxDb" id="4932-YKL162C-A"/>
<dbReference type="EnsemblFungi" id="YKL162C-A_mRNA">
    <property type="protein sequence ID" value="YKL162C-A"/>
    <property type="gene ID" value="YKL162C-A"/>
</dbReference>
<dbReference type="AGR" id="SGD:S000007244"/>
<dbReference type="SGD" id="S000007244">
    <property type="gene designation" value="YKL162C-A"/>
</dbReference>
<dbReference type="HOGENOM" id="CLU_3126153_0_0_1"/>
<protein>
    <recommendedName>
        <fullName>Putative uncharacterized protein YKL162C-A</fullName>
    </recommendedName>
</protein>
<organism>
    <name type="scientific">Saccharomyces cerevisiae (strain ATCC 204508 / S288c)</name>
    <name type="common">Baker's yeast</name>
    <dbReference type="NCBI Taxonomy" id="559292"/>
    <lineage>
        <taxon>Eukaryota</taxon>
        <taxon>Fungi</taxon>
        <taxon>Dikarya</taxon>
        <taxon>Ascomycota</taxon>
        <taxon>Saccharomycotina</taxon>
        <taxon>Saccharomycetes</taxon>
        <taxon>Saccharomycetales</taxon>
        <taxon>Saccharomycetaceae</taxon>
        <taxon>Saccharomyces</taxon>
    </lineage>
</organism>